<accession>A4QF02</accession>
<evidence type="ECO:0000255" key="1">
    <source>
        <dbReference type="HAMAP-Rule" id="MF_00652"/>
    </source>
</evidence>
<protein>
    <recommendedName>
        <fullName evidence="1">UPF0246 protein cgR_1824</fullName>
    </recommendedName>
</protein>
<organism>
    <name type="scientific">Corynebacterium glutamicum (strain R)</name>
    <dbReference type="NCBI Taxonomy" id="340322"/>
    <lineage>
        <taxon>Bacteria</taxon>
        <taxon>Bacillati</taxon>
        <taxon>Actinomycetota</taxon>
        <taxon>Actinomycetes</taxon>
        <taxon>Mycobacteriales</taxon>
        <taxon>Corynebacteriaceae</taxon>
        <taxon>Corynebacterium</taxon>
    </lineage>
</organism>
<comment type="similarity">
    <text evidence="1">Belongs to the UPF0246 family.</text>
</comment>
<dbReference type="EMBL" id="AP009044">
    <property type="protein sequence ID" value="BAF54818.1"/>
    <property type="molecule type" value="Genomic_DNA"/>
</dbReference>
<dbReference type="RefSeq" id="WP_011897405.1">
    <property type="nucleotide sequence ID" value="NC_009342.1"/>
</dbReference>
<dbReference type="SMR" id="A4QF02"/>
<dbReference type="KEGG" id="cgt:cgR_1824"/>
<dbReference type="HOGENOM" id="CLU_071581_0_0_11"/>
<dbReference type="PhylomeDB" id="A4QF02"/>
<dbReference type="Proteomes" id="UP000006698">
    <property type="component" value="Chromosome"/>
</dbReference>
<dbReference type="GO" id="GO:0005829">
    <property type="term" value="C:cytosol"/>
    <property type="evidence" value="ECO:0007669"/>
    <property type="project" value="TreeGrafter"/>
</dbReference>
<dbReference type="GO" id="GO:0033194">
    <property type="term" value="P:response to hydroperoxide"/>
    <property type="evidence" value="ECO:0007669"/>
    <property type="project" value="TreeGrafter"/>
</dbReference>
<dbReference type="HAMAP" id="MF_00652">
    <property type="entry name" value="UPF0246"/>
    <property type="match status" value="1"/>
</dbReference>
<dbReference type="InterPro" id="IPR005583">
    <property type="entry name" value="YaaA"/>
</dbReference>
<dbReference type="NCBIfam" id="NF002546">
    <property type="entry name" value="PRK02101.2-4"/>
    <property type="match status" value="1"/>
</dbReference>
<dbReference type="PANTHER" id="PTHR30283:SF4">
    <property type="entry name" value="PEROXIDE STRESS RESISTANCE PROTEIN YAAA"/>
    <property type="match status" value="1"/>
</dbReference>
<dbReference type="PANTHER" id="PTHR30283">
    <property type="entry name" value="PEROXIDE STRESS RESPONSE PROTEIN YAAA"/>
    <property type="match status" value="1"/>
</dbReference>
<dbReference type="Pfam" id="PF03883">
    <property type="entry name" value="H2O2_YaaD"/>
    <property type="match status" value="1"/>
</dbReference>
<name>Y1824_CORGB</name>
<sequence length="245" mass="26701">MLIVLPPSETKTHGGSGKPLDFHHLSFPSLTKARQTILADLQALEVDEALKVLGISEKLRPEAESNRALETNPTMPAIFRYSGVLYDALDAATLPEKALERLAIGSALFGVIHATDPIPHYRLSGGTKLPTKSGELPTMKARWGTSISEALIDVNQLVIDLRSGTYQQLGRVKDAVTVRVESVMEDGSRKVVSHFNKHYKGEFARVLALSEKEARTAEDVMSIAQAAGLVVEENPNHKETLTLVV</sequence>
<feature type="chain" id="PRO_1000061596" description="UPF0246 protein cgR_1824">
    <location>
        <begin position="1"/>
        <end position="245"/>
    </location>
</feature>
<gene>
    <name type="ordered locus">cgR_1824</name>
</gene>
<proteinExistence type="inferred from homology"/>
<reference key="1">
    <citation type="journal article" date="2007" name="Microbiology">
        <title>Comparative analysis of the Corynebacterium glutamicum group and complete genome sequence of strain R.</title>
        <authorList>
            <person name="Yukawa H."/>
            <person name="Omumasaba C.A."/>
            <person name="Nonaka H."/>
            <person name="Kos P."/>
            <person name="Okai N."/>
            <person name="Suzuki N."/>
            <person name="Suda M."/>
            <person name="Tsuge Y."/>
            <person name="Watanabe J."/>
            <person name="Ikeda Y."/>
            <person name="Vertes A.A."/>
            <person name="Inui M."/>
        </authorList>
    </citation>
    <scope>NUCLEOTIDE SEQUENCE [LARGE SCALE GENOMIC DNA]</scope>
    <source>
        <strain>R</strain>
    </source>
</reference>